<feature type="chain" id="PRO_1000091719" description="Elongation factor G">
    <location>
        <begin position="1"/>
        <end position="692"/>
    </location>
</feature>
<feature type="domain" description="tr-type G">
    <location>
        <begin position="8"/>
        <end position="283"/>
    </location>
</feature>
<feature type="binding site" evidence="1">
    <location>
        <begin position="17"/>
        <end position="24"/>
    </location>
    <ligand>
        <name>GTP</name>
        <dbReference type="ChEBI" id="CHEBI:37565"/>
    </ligand>
</feature>
<feature type="binding site" evidence="1">
    <location>
        <begin position="81"/>
        <end position="85"/>
    </location>
    <ligand>
        <name>GTP</name>
        <dbReference type="ChEBI" id="CHEBI:37565"/>
    </ligand>
</feature>
<feature type="binding site" evidence="1">
    <location>
        <begin position="135"/>
        <end position="138"/>
    </location>
    <ligand>
        <name>GTP</name>
        <dbReference type="ChEBI" id="CHEBI:37565"/>
    </ligand>
</feature>
<organism>
    <name type="scientific">Helicobacter pylori (strain P12)</name>
    <dbReference type="NCBI Taxonomy" id="570508"/>
    <lineage>
        <taxon>Bacteria</taxon>
        <taxon>Pseudomonadati</taxon>
        <taxon>Campylobacterota</taxon>
        <taxon>Epsilonproteobacteria</taxon>
        <taxon>Campylobacterales</taxon>
        <taxon>Helicobacteraceae</taxon>
        <taxon>Helicobacter</taxon>
    </lineage>
</organism>
<protein>
    <recommendedName>
        <fullName evidence="1">Elongation factor G</fullName>
        <shortName evidence="1">EF-G</shortName>
    </recommendedName>
</protein>
<sequence length="692" mass="77092">MARKTPLNRIRNIGIAAHIDAGKTTTSERILFYTGVSHKIGEVHDGAATMDWMEQEKERGITITSAATTCFWKDHQINLIDTPGHVDFTIEVERSMRVLDGAVSVFCSVGGVQPQSETVWRQANKYGVPRIVFVNKMDRIGANFYNVENQIKQRLKANPVPINIPIGAEDTFIGVIDLVQMKAIVWNNETMGAKYDVEEIPSDLLEKAKQYREKLVEAVAEQDEALMEKYLGGEELNIEEIKKGIKTGCLNMSLIPMLCGSSFKNKGVQTLLDAVIDYLPAPTEVVDIKGIDPKTEEEVFVKSSDDGEFAGLAFKIMTDPFVGQLTFVRVYRGNLESGSYVYNSTKDKKERVGRLLKMHSNKREDIKEVYAGEICAFVGLKDTLTGDTLCDEKNAVVLERMEFPEPVIHIAVEPKTKADQEKMGVALGKLAEEDPSFRVMTQEETGQTLIGGMGELHLEIIVDRLKREFKVEAEIGQPQVAFRETIRSSVSKEHKYAKQSGGRGQYGHVFIKLEPKEPGSGYEFVNEISGGVIPKEYIPAVDKGIQEAMQNGVLAGYPVVDFKVTLYDGSYHDVDSSEMAFKIAGSMAFKEASRAANPVLLEPMMKVEVEVPEEYMGDVIGDLNRRRGQINSMDDRLGLKIVNAFVPLVEMFGYSTDLRSATQGRGTYSMEFDHYGEVPSNIAKEIVEKRKG</sequence>
<proteinExistence type="inferred from homology"/>
<reference key="1">
    <citation type="submission" date="2008-10" db="EMBL/GenBank/DDBJ databases">
        <title>The complete genome sequence of Helicobacter pylori strain P12.</title>
        <authorList>
            <person name="Fischer W."/>
            <person name="Windhager L."/>
            <person name="Karnholz A."/>
            <person name="Zeiller M."/>
            <person name="Zimmer R."/>
            <person name="Haas R."/>
        </authorList>
    </citation>
    <scope>NUCLEOTIDE SEQUENCE [LARGE SCALE GENOMIC DNA]</scope>
    <source>
        <strain>P12</strain>
    </source>
</reference>
<keyword id="KW-0963">Cytoplasm</keyword>
<keyword id="KW-0251">Elongation factor</keyword>
<keyword id="KW-0342">GTP-binding</keyword>
<keyword id="KW-0547">Nucleotide-binding</keyword>
<keyword id="KW-0648">Protein biosynthesis</keyword>
<evidence type="ECO:0000255" key="1">
    <source>
        <dbReference type="HAMAP-Rule" id="MF_00054"/>
    </source>
</evidence>
<gene>
    <name evidence="1" type="primary">fusA</name>
    <name type="ordered locus">HPP12_1160</name>
</gene>
<comment type="function">
    <text evidence="1">Catalyzes the GTP-dependent ribosomal translocation step during translation elongation. During this step, the ribosome changes from the pre-translocational (PRE) to the post-translocational (POST) state as the newly formed A-site-bound peptidyl-tRNA and P-site-bound deacylated tRNA move to the P and E sites, respectively. Catalyzes the coordinated movement of the two tRNA molecules, the mRNA and conformational changes in the ribosome.</text>
</comment>
<comment type="subcellular location">
    <subcellularLocation>
        <location evidence="1">Cytoplasm</location>
    </subcellularLocation>
</comment>
<comment type="similarity">
    <text evidence="1">Belongs to the TRAFAC class translation factor GTPase superfamily. Classic translation factor GTPase family. EF-G/EF-2 subfamily.</text>
</comment>
<name>EFG_HELP2</name>
<dbReference type="EMBL" id="CP001217">
    <property type="protein sequence ID" value="ACJ08312.1"/>
    <property type="molecule type" value="Genomic_DNA"/>
</dbReference>
<dbReference type="SMR" id="B6JN34"/>
<dbReference type="KEGG" id="hpp:HPP12_1160"/>
<dbReference type="HOGENOM" id="CLU_002794_4_1_7"/>
<dbReference type="Proteomes" id="UP000008198">
    <property type="component" value="Chromosome"/>
</dbReference>
<dbReference type="GO" id="GO:0005737">
    <property type="term" value="C:cytoplasm"/>
    <property type="evidence" value="ECO:0007669"/>
    <property type="project" value="UniProtKB-SubCell"/>
</dbReference>
<dbReference type="GO" id="GO:0005525">
    <property type="term" value="F:GTP binding"/>
    <property type="evidence" value="ECO:0007669"/>
    <property type="project" value="UniProtKB-UniRule"/>
</dbReference>
<dbReference type="GO" id="GO:0003924">
    <property type="term" value="F:GTPase activity"/>
    <property type="evidence" value="ECO:0007669"/>
    <property type="project" value="InterPro"/>
</dbReference>
<dbReference type="GO" id="GO:0003746">
    <property type="term" value="F:translation elongation factor activity"/>
    <property type="evidence" value="ECO:0007669"/>
    <property type="project" value="UniProtKB-UniRule"/>
</dbReference>
<dbReference type="GO" id="GO:0032790">
    <property type="term" value="P:ribosome disassembly"/>
    <property type="evidence" value="ECO:0007669"/>
    <property type="project" value="TreeGrafter"/>
</dbReference>
<dbReference type="CDD" id="cd01886">
    <property type="entry name" value="EF-G"/>
    <property type="match status" value="1"/>
</dbReference>
<dbReference type="CDD" id="cd16262">
    <property type="entry name" value="EFG_III"/>
    <property type="match status" value="1"/>
</dbReference>
<dbReference type="CDD" id="cd01434">
    <property type="entry name" value="EFG_mtEFG1_IV"/>
    <property type="match status" value="1"/>
</dbReference>
<dbReference type="CDD" id="cd03713">
    <property type="entry name" value="EFG_mtEFG_C"/>
    <property type="match status" value="1"/>
</dbReference>
<dbReference type="CDD" id="cd04088">
    <property type="entry name" value="EFG_mtEFG_II"/>
    <property type="match status" value="1"/>
</dbReference>
<dbReference type="FunFam" id="2.40.30.10:FF:000006">
    <property type="entry name" value="Elongation factor G"/>
    <property type="match status" value="1"/>
</dbReference>
<dbReference type="FunFam" id="3.30.230.10:FF:000003">
    <property type="entry name" value="Elongation factor G"/>
    <property type="match status" value="1"/>
</dbReference>
<dbReference type="FunFam" id="3.30.70.240:FF:000001">
    <property type="entry name" value="Elongation factor G"/>
    <property type="match status" value="1"/>
</dbReference>
<dbReference type="FunFam" id="3.30.70.870:FF:000001">
    <property type="entry name" value="Elongation factor G"/>
    <property type="match status" value="1"/>
</dbReference>
<dbReference type="FunFam" id="3.40.50.300:FF:000029">
    <property type="entry name" value="Elongation factor G"/>
    <property type="match status" value="1"/>
</dbReference>
<dbReference type="Gene3D" id="3.30.230.10">
    <property type="match status" value="1"/>
</dbReference>
<dbReference type="Gene3D" id="3.30.70.240">
    <property type="match status" value="1"/>
</dbReference>
<dbReference type="Gene3D" id="3.30.70.870">
    <property type="entry name" value="Elongation Factor G (Translational Gtpase), domain 3"/>
    <property type="match status" value="1"/>
</dbReference>
<dbReference type="Gene3D" id="3.40.50.300">
    <property type="entry name" value="P-loop containing nucleotide triphosphate hydrolases"/>
    <property type="match status" value="1"/>
</dbReference>
<dbReference type="Gene3D" id="2.40.30.10">
    <property type="entry name" value="Translation factors"/>
    <property type="match status" value="1"/>
</dbReference>
<dbReference type="HAMAP" id="MF_00054_B">
    <property type="entry name" value="EF_G_EF_2_B"/>
    <property type="match status" value="1"/>
</dbReference>
<dbReference type="InterPro" id="IPR053905">
    <property type="entry name" value="EF-G-like_DII"/>
</dbReference>
<dbReference type="InterPro" id="IPR041095">
    <property type="entry name" value="EFG_II"/>
</dbReference>
<dbReference type="InterPro" id="IPR009022">
    <property type="entry name" value="EFG_III"/>
</dbReference>
<dbReference type="InterPro" id="IPR035647">
    <property type="entry name" value="EFG_III/V"/>
</dbReference>
<dbReference type="InterPro" id="IPR047872">
    <property type="entry name" value="EFG_IV"/>
</dbReference>
<dbReference type="InterPro" id="IPR035649">
    <property type="entry name" value="EFG_V"/>
</dbReference>
<dbReference type="InterPro" id="IPR000640">
    <property type="entry name" value="EFG_V-like"/>
</dbReference>
<dbReference type="InterPro" id="IPR031157">
    <property type="entry name" value="G_TR_CS"/>
</dbReference>
<dbReference type="InterPro" id="IPR027417">
    <property type="entry name" value="P-loop_NTPase"/>
</dbReference>
<dbReference type="InterPro" id="IPR020568">
    <property type="entry name" value="Ribosomal_Su5_D2-typ_SF"/>
</dbReference>
<dbReference type="InterPro" id="IPR014721">
    <property type="entry name" value="Ribsml_uS5_D2-typ_fold_subgr"/>
</dbReference>
<dbReference type="InterPro" id="IPR005225">
    <property type="entry name" value="Small_GTP-bd"/>
</dbReference>
<dbReference type="InterPro" id="IPR000795">
    <property type="entry name" value="T_Tr_GTP-bd_dom"/>
</dbReference>
<dbReference type="InterPro" id="IPR009000">
    <property type="entry name" value="Transl_B-barrel_sf"/>
</dbReference>
<dbReference type="InterPro" id="IPR004540">
    <property type="entry name" value="Transl_elong_EFG/EF2"/>
</dbReference>
<dbReference type="InterPro" id="IPR005517">
    <property type="entry name" value="Transl_elong_EFG/EF2_IV"/>
</dbReference>
<dbReference type="NCBIfam" id="TIGR00484">
    <property type="entry name" value="EF-G"/>
    <property type="match status" value="1"/>
</dbReference>
<dbReference type="NCBIfam" id="NF009379">
    <property type="entry name" value="PRK12740.1-3"/>
    <property type="match status" value="1"/>
</dbReference>
<dbReference type="NCBIfam" id="NF009381">
    <property type="entry name" value="PRK12740.1-5"/>
    <property type="match status" value="1"/>
</dbReference>
<dbReference type="NCBIfam" id="TIGR00231">
    <property type="entry name" value="small_GTP"/>
    <property type="match status" value="1"/>
</dbReference>
<dbReference type="PANTHER" id="PTHR43261:SF1">
    <property type="entry name" value="RIBOSOME-RELEASING FACTOR 2, MITOCHONDRIAL"/>
    <property type="match status" value="1"/>
</dbReference>
<dbReference type="PANTHER" id="PTHR43261">
    <property type="entry name" value="TRANSLATION ELONGATION FACTOR G-RELATED"/>
    <property type="match status" value="1"/>
</dbReference>
<dbReference type="Pfam" id="PF22042">
    <property type="entry name" value="EF-G_D2"/>
    <property type="match status" value="1"/>
</dbReference>
<dbReference type="Pfam" id="PF00679">
    <property type="entry name" value="EFG_C"/>
    <property type="match status" value="1"/>
</dbReference>
<dbReference type="Pfam" id="PF14492">
    <property type="entry name" value="EFG_III"/>
    <property type="match status" value="1"/>
</dbReference>
<dbReference type="Pfam" id="PF03764">
    <property type="entry name" value="EFG_IV"/>
    <property type="match status" value="1"/>
</dbReference>
<dbReference type="Pfam" id="PF00009">
    <property type="entry name" value="GTP_EFTU"/>
    <property type="match status" value="1"/>
</dbReference>
<dbReference type="PRINTS" id="PR00315">
    <property type="entry name" value="ELONGATNFCT"/>
</dbReference>
<dbReference type="SMART" id="SM00838">
    <property type="entry name" value="EFG_C"/>
    <property type="match status" value="1"/>
</dbReference>
<dbReference type="SMART" id="SM00889">
    <property type="entry name" value="EFG_IV"/>
    <property type="match status" value="1"/>
</dbReference>
<dbReference type="SUPFAM" id="SSF54980">
    <property type="entry name" value="EF-G C-terminal domain-like"/>
    <property type="match status" value="2"/>
</dbReference>
<dbReference type="SUPFAM" id="SSF52540">
    <property type="entry name" value="P-loop containing nucleoside triphosphate hydrolases"/>
    <property type="match status" value="1"/>
</dbReference>
<dbReference type="SUPFAM" id="SSF54211">
    <property type="entry name" value="Ribosomal protein S5 domain 2-like"/>
    <property type="match status" value="1"/>
</dbReference>
<dbReference type="SUPFAM" id="SSF50447">
    <property type="entry name" value="Translation proteins"/>
    <property type="match status" value="1"/>
</dbReference>
<dbReference type="PROSITE" id="PS00301">
    <property type="entry name" value="G_TR_1"/>
    <property type="match status" value="1"/>
</dbReference>
<dbReference type="PROSITE" id="PS51722">
    <property type="entry name" value="G_TR_2"/>
    <property type="match status" value="1"/>
</dbReference>
<accession>B6JN34</accession>